<accession>A8GNF2</accession>
<proteinExistence type="inferred from homology"/>
<name>SSRP_RICAH</name>
<keyword id="KW-0963">Cytoplasm</keyword>
<keyword id="KW-0694">RNA-binding</keyword>
<organism>
    <name type="scientific">Rickettsia akari (strain Hartford)</name>
    <dbReference type="NCBI Taxonomy" id="293614"/>
    <lineage>
        <taxon>Bacteria</taxon>
        <taxon>Pseudomonadati</taxon>
        <taxon>Pseudomonadota</taxon>
        <taxon>Alphaproteobacteria</taxon>
        <taxon>Rickettsiales</taxon>
        <taxon>Rickettsiaceae</taxon>
        <taxon>Rickettsieae</taxon>
        <taxon>Rickettsia</taxon>
        <taxon>spotted fever group</taxon>
    </lineage>
</organism>
<comment type="function">
    <text evidence="1">Required for rescue of stalled ribosomes mediated by trans-translation. Binds to transfer-messenger RNA (tmRNA), required for stable association of tmRNA with ribosomes. tmRNA and SmpB together mimic tRNA shape, replacing the anticodon stem-loop with SmpB. tmRNA is encoded by the ssrA gene; the 2 termini fold to resemble tRNA(Ala) and it encodes a 'tag peptide', a short internal open reading frame. During trans-translation Ala-aminoacylated tmRNA acts like a tRNA, entering the A-site of stalled ribosomes, displacing the stalled mRNA. The ribosome then switches to translate the ORF on the tmRNA; the nascent peptide is terminated with the 'tag peptide' encoded by the tmRNA and targeted for degradation. The ribosome is freed to recommence translation, which seems to be the essential function of trans-translation.</text>
</comment>
<comment type="subcellular location">
    <subcellularLocation>
        <location evidence="1">Cytoplasm</location>
    </subcellularLocation>
    <text evidence="1">The tmRNA-SmpB complex associates with stalled 70S ribosomes.</text>
</comment>
<comment type="similarity">
    <text evidence="1">Belongs to the SmpB family.</text>
</comment>
<sequence>MTEYKKVIAQNNKAIFNYFIEERLEAGIVLNGSEVQSLRQGKASIEESHAADTGHEVFLYNCHIAEYEKANRFNHSTRRPRKLLLHTKEIKKIIGRIRIKGYTLVALSMYFNKQNKVKVELGIAKGKKLHDKRESIKEKDWKRDQSRLIRQK</sequence>
<dbReference type="EMBL" id="CP000847">
    <property type="protein sequence ID" value="ABV74927.1"/>
    <property type="molecule type" value="Genomic_DNA"/>
</dbReference>
<dbReference type="RefSeq" id="WP_012149560.1">
    <property type="nucleotide sequence ID" value="NC_009881.1"/>
</dbReference>
<dbReference type="SMR" id="A8GNF2"/>
<dbReference type="STRING" id="293614.A1C_03205"/>
<dbReference type="KEGG" id="rak:A1C_03205"/>
<dbReference type="eggNOG" id="COG0691">
    <property type="taxonomic scope" value="Bacteria"/>
</dbReference>
<dbReference type="HOGENOM" id="CLU_108953_0_1_5"/>
<dbReference type="Proteomes" id="UP000006830">
    <property type="component" value="Chromosome"/>
</dbReference>
<dbReference type="GO" id="GO:0005829">
    <property type="term" value="C:cytosol"/>
    <property type="evidence" value="ECO:0007669"/>
    <property type="project" value="TreeGrafter"/>
</dbReference>
<dbReference type="GO" id="GO:0003723">
    <property type="term" value="F:RNA binding"/>
    <property type="evidence" value="ECO:0007669"/>
    <property type="project" value="UniProtKB-UniRule"/>
</dbReference>
<dbReference type="GO" id="GO:0070929">
    <property type="term" value="P:trans-translation"/>
    <property type="evidence" value="ECO:0007669"/>
    <property type="project" value="UniProtKB-UniRule"/>
</dbReference>
<dbReference type="CDD" id="cd09294">
    <property type="entry name" value="SmpB"/>
    <property type="match status" value="1"/>
</dbReference>
<dbReference type="Gene3D" id="2.40.280.10">
    <property type="match status" value="1"/>
</dbReference>
<dbReference type="HAMAP" id="MF_00023">
    <property type="entry name" value="SmpB"/>
    <property type="match status" value="1"/>
</dbReference>
<dbReference type="InterPro" id="IPR023620">
    <property type="entry name" value="SmpB"/>
</dbReference>
<dbReference type="InterPro" id="IPR000037">
    <property type="entry name" value="SsrA-bd_prot"/>
</dbReference>
<dbReference type="InterPro" id="IPR020081">
    <property type="entry name" value="SsrA-bd_prot_CS"/>
</dbReference>
<dbReference type="NCBIfam" id="NF003843">
    <property type="entry name" value="PRK05422.1"/>
    <property type="match status" value="1"/>
</dbReference>
<dbReference type="NCBIfam" id="TIGR00086">
    <property type="entry name" value="smpB"/>
    <property type="match status" value="1"/>
</dbReference>
<dbReference type="PANTHER" id="PTHR30308:SF2">
    <property type="entry name" value="SSRA-BINDING PROTEIN"/>
    <property type="match status" value="1"/>
</dbReference>
<dbReference type="PANTHER" id="PTHR30308">
    <property type="entry name" value="TMRNA-BINDING COMPONENT OF TRANS-TRANSLATION TAGGING COMPLEX"/>
    <property type="match status" value="1"/>
</dbReference>
<dbReference type="Pfam" id="PF01668">
    <property type="entry name" value="SmpB"/>
    <property type="match status" value="1"/>
</dbReference>
<dbReference type="SUPFAM" id="SSF74982">
    <property type="entry name" value="Small protein B (SmpB)"/>
    <property type="match status" value="1"/>
</dbReference>
<dbReference type="PROSITE" id="PS01317">
    <property type="entry name" value="SSRP"/>
    <property type="match status" value="1"/>
</dbReference>
<evidence type="ECO:0000255" key="1">
    <source>
        <dbReference type="HAMAP-Rule" id="MF_00023"/>
    </source>
</evidence>
<protein>
    <recommendedName>
        <fullName evidence="1">SsrA-binding protein</fullName>
    </recommendedName>
    <alternativeName>
        <fullName evidence="1">Small protein B</fullName>
    </alternativeName>
</protein>
<feature type="chain" id="PRO_1000002129" description="SsrA-binding protein">
    <location>
        <begin position="1"/>
        <end position="152"/>
    </location>
</feature>
<gene>
    <name evidence="1" type="primary">smpB</name>
    <name type="ordered locus">A1C_03205</name>
</gene>
<reference key="1">
    <citation type="submission" date="2007-09" db="EMBL/GenBank/DDBJ databases">
        <title>Complete genome sequence of Rickettsia akari.</title>
        <authorList>
            <person name="Madan A."/>
            <person name="Fahey J."/>
            <person name="Helton E."/>
            <person name="Ketteman M."/>
            <person name="Madan A."/>
            <person name="Rodrigues S."/>
            <person name="Sanchez A."/>
            <person name="Whiting M."/>
            <person name="Dasch G."/>
            <person name="Eremeeva M."/>
        </authorList>
    </citation>
    <scope>NUCLEOTIDE SEQUENCE [LARGE SCALE GENOMIC DNA]</scope>
    <source>
        <strain>Hartford</strain>
    </source>
</reference>